<protein>
    <recommendedName>
        <fullName>Arf-GAP with GTPase, ANK repeat and PH domain-containing protein 6</fullName>
        <shortName>AGAP-6</shortName>
    </recommendedName>
    <alternativeName>
        <fullName>Centaurin-gamma-like family member 3</fullName>
    </alternativeName>
</protein>
<reference key="1">
    <citation type="journal article" date="2004" name="Nature">
        <title>The DNA sequence and comparative analysis of human chromosome 10.</title>
        <authorList>
            <person name="Deloukas P."/>
            <person name="Earthrowl M.E."/>
            <person name="Grafham D.V."/>
            <person name="Rubenfield M."/>
            <person name="French L."/>
            <person name="Steward C.A."/>
            <person name="Sims S.K."/>
            <person name="Jones M.C."/>
            <person name="Searle S."/>
            <person name="Scott C."/>
            <person name="Howe K."/>
            <person name="Hunt S.E."/>
            <person name="Andrews T.D."/>
            <person name="Gilbert J.G.R."/>
            <person name="Swarbreck D."/>
            <person name="Ashurst J.L."/>
            <person name="Taylor A."/>
            <person name="Battles J."/>
            <person name="Bird C.P."/>
            <person name="Ainscough R."/>
            <person name="Almeida J.P."/>
            <person name="Ashwell R.I.S."/>
            <person name="Ambrose K.D."/>
            <person name="Babbage A.K."/>
            <person name="Bagguley C.L."/>
            <person name="Bailey J."/>
            <person name="Banerjee R."/>
            <person name="Bates K."/>
            <person name="Beasley H."/>
            <person name="Bray-Allen S."/>
            <person name="Brown A.J."/>
            <person name="Brown J.Y."/>
            <person name="Burford D.C."/>
            <person name="Burrill W."/>
            <person name="Burton J."/>
            <person name="Cahill P."/>
            <person name="Camire D."/>
            <person name="Carter N.P."/>
            <person name="Chapman J.C."/>
            <person name="Clark S.Y."/>
            <person name="Clarke G."/>
            <person name="Clee C.M."/>
            <person name="Clegg S."/>
            <person name="Corby N."/>
            <person name="Coulson A."/>
            <person name="Dhami P."/>
            <person name="Dutta I."/>
            <person name="Dunn M."/>
            <person name="Faulkner L."/>
            <person name="Frankish A."/>
            <person name="Frankland J.A."/>
            <person name="Garner P."/>
            <person name="Garnett J."/>
            <person name="Gribble S."/>
            <person name="Griffiths C."/>
            <person name="Grocock R."/>
            <person name="Gustafson E."/>
            <person name="Hammond S."/>
            <person name="Harley J.L."/>
            <person name="Hart E."/>
            <person name="Heath P.D."/>
            <person name="Ho T.P."/>
            <person name="Hopkins B."/>
            <person name="Horne J."/>
            <person name="Howden P.J."/>
            <person name="Huckle E."/>
            <person name="Hynds C."/>
            <person name="Johnson C."/>
            <person name="Johnson D."/>
            <person name="Kana A."/>
            <person name="Kay M."/>
            <person name="Kimberley A.M."/>
            <person name="Kershaw J.K."/>
            <person name="Kokkinaki M."/>
            <person name="Laird G.K."/>
            <person name="Lawlor S."/>
            <person name="Lee H.M."/>
            <person name="Leongamornlert D.A."/>
            <person name="Laird G."/>
            <person name="Lloyd C."/>
            <person name="Lloyd D.M."/>
            <person name="Loveland J."/>
            <person name="Lovell J."/>
            <person name="McLaren S."/>
            <person name="McLay K.E."/>
            <person name="McMurray A."/>
            <person name="Mashreghi-Mohammadi M."/>
            <person name="Matthews L."/>
            <person name="Milne S."/>
            <person name="Nickerson T."/>
            <person name="Nguyen M."/>
            <person name="Overton-Larty E."/>
            <person name="Palmer S.A."/>
            <person name="Pearce A.V."/>
            <person name="Peck A.I."/>
            <person name="Pelan S."/>
            <person name="Phillimore B."/>
            <person name="Porter K."/>
            <person name="Rice C.M."/>
            <person name="Rogosin A."/>
            <person name="Ross M.T."/>
            <person name="Sarafidou T."/>
            <person name="Sehra H.K."/>
            <person name="Shownkeen R."/>
            <person name="Skuce C.D."/>
            <person name="Smith M."/>
            <person name="Standring L."/>
            <person name="Sycamore N."/>
            <person name="Tester J."/>
            <person name="Thorpe A."/>
            <person name="Torcasso W."/>
            <person name="Tracey A."/>
            <person name="Tromans A."/>
            <person name="Tsolas J."/>
            <person name="Wall M."/>
            <person name="Walsh J."/>
            <person name="Wang H."/>
            <person name="Weinstock K."/>
            <person name="West A.P."/>
            <person name="Willey D.L."/>
            <person name="Whitehead S.L."/>
            <person name="Wilming L."/>
            <person name="Wray P.W."/>
            <person name="Young L."/>
            <person name="Chen Y."/>
            <person name="Lovering R.C."/>
            <person name="Moschonas N.K."/>
            <person name="Siebert R."/>
            <person name="Fechtel K."/>
            <person name="Bentley D."/>
            <person name="Durbin R.M."/>
            <person name="Hubbard T."/>
            <person name="Doucette-Stamm L."/>
            <person name="Beck S."/>
            <person name="Smith D.R."/>
            <person name="Rogers J."/>
        </authorList>
    </citation>
    <scope>NUCLEOTIDE SEQUENCE [LARGE SCALE GENOMIC DNA]</scope>
</reference>
<reference key="2">
    <citation type="journal article" date="2004" name="Genome Res.">
        <title>The status, quality, and expansion of the NIH full-length cDNA project: the Mammalian Gene Collection (MGC).</title>
        <authorList>
            <consortium name="The MGC Project Team"/>
        </authorList>
    </citation>
    <scope>NUCLEOTIDE SEQUENCE [LARGE SCALE MRNA] (ISOFORM 2)</scope>
</reference>
<feature type="chain" id="PRO_0000284674" description="Arf-GAP with GTPase, ANK repeat and PH domain-containing protein 6">
    <location>
        <begin position="1"/>
        <end position="663"/>
    </location>
</feature>
<feature type="domain" description="PH" evidence="1">
    <location>
        <begin position="259"/>
        <end position="420"/>
    </location>
</feature>
<feature type="domain" description="Arf-GAP" evidence="2">
    <location>
        <begin position="441"/>
        <end position="561"/>
    </location>
</feature>
<feature type="repeat" description="ANK 1">
    <location>
        <begin position="600"/>
        <end position="629"/>
    </location>
</feature>
<feature type="repeat" description="ANK 2">
    <location>
        <begin position="633"/>
        <end position="662"/>
    </location>
</feature>
<feature type="zinc finger region" description="C4-type" evidence="2">
    <location>
        <begin position="456"/>
        <end position="479"/>
    </location>
</feature>
<feature type="region of interest" description="Disordered" evidence="3">
    <location>
        <begin position="185"/>
        <end position="216"/>
    </location>
</feature>
<feature type="region of interest" description="Disordered" evidence="3">
    <location>
        <begin position="231"/>
        <end position="255"/>
    </location>
</feature>
<feature type="region of interest" description="Disordered" evidence="3">
    <location>
        <begin position="359"/>
        <end position="381"/>
    </location>
</feature>
<feature type="compositionally biased region" description="Low complexity" evidence="3">
    <location>
        <begin position="188"/>
        <end position="202"/>
    </location>
</feature>
<feature type="compositionally biased region" description="Polar residues" evidence="3">
    <location>
        <begin position="203"/>
        <end position="216"/>
    </location>
</feature>
<feature type="compositionally biased region" description="Basic and acidic residues" evidence="3">
    <location>
        <begin position="235"/>
        <end position="250"/>
    </location>
</feature>
<feature type="splice variant" id="VSP_040815" description="In isoform 2." evidence="4">
    <original>P</original>
    <variation>PEALEFNLSANPESSTIFQRNSQT</variation>
    <location>
        <position position="73"/>
    </location>
</feature>
<feature type="sequence conflict" description="In Ref. 2; BC131545." evidence="5" ref="2">
    <original>R</original>
    <variation>G</variation>
    <location>
        <position position="37"/>
    </location>
</feature>
<feature type="sequence conflict" description="In Ref. 2; BC131545." evidence="5" ref="2">
    <original>R</original>
    <variation>Q</variation>
    <location>
        <position position="70"/>
    </location>
</feature>
<evidence type="ECO:0000255" key="1">
    <source>
        <dbReference type="PROSITE-ProRule" id="PRU00145"/>
    </source>
</evidence>
<evidence type="ECO:0000255" key="2">
    <source>
        <dbReference type="PROSITE-ProRule" id="PRU00288"/>
    </source>
</evidence>
<evidence type="ECO:0000256" key="3">
    <source>
        <dbReference type="SAM" id="MobiDB-lite"/>
    </source>
</evidence>
<evidence type="ECO:0000303" key="4">
    <source>
    </source>
</evidence>
<evidence type="ECO:0000305" key="5"/>
<comment type="function">
    <text evidence="5">Putative GTPase-activating protein.</text>
</comment>
<comment type="alternative products">
    <event type="alternative splicing"/>
    <isoform>
        <id>Q5VW22-1</id>
        <name>1</name>
        <sequence type="displayed"/>
    </isoform>
    <isoform>
        <id>Q5VW22-2</id>
        <name>2</name>
        <sequence type="described" ref="VSP_040815"/>
    </isoform>
</comment>
<comment type="miscellaneous">
    <text>Encoded by one of the numerous copies of centaurin gamma-like genes clustered in the q11 region of chromosome 10.</text>
</comment>
<comment type="miscellaneous">
    <molecule>Isoform 1</molecule>
    <text>Prediction based on family homologs sequence.</text>
</comment>
<comment type="similarity">
    <text evidence="5">Belongs to the centaurin gamma-like family.</text>
</comment>
<comment type="sequence caution" evidence="5">
    <conflict type="frameshift">
        <sequence resource="EMBL" id="BC131545"/>
    </conflict>
</comment>
<name>AGAP6_HUMAN</name>
<keyword id="KW-0025">Alternative splicing</keyword>
<keyword id="KW-0040">ANK repeat</keyword>
<keyword id="KW-0343">GTPase activation</keyword>
<keyword id="KW-0479">Metal-binding</keyword>
<keyword id="KW-1185">Reference proteome</keyword>
<keyword id="KW-0677">Repeat</keyword>
<keyword id="KW-0862">Zinc</keyword>
<keyword id="KW-0863">Zinc-finger</keyword>
<proteinExistence type="evidence at transcript level"/>
<gene>
    <name type="primary">AGAP6</name>
    <name type="synonym">CTGLF3</name>
</gene>
<sequence length="663" mass="73127">MGNILTCRVHPSVSLEFDQQQGSVCPSESETYEAGARDRMAGAPMAAAVQPAEVTVEVGEDLHMHHVRDREMPEALEFNPSANPEASTIFQRNSQTDVVEIRRSNCTNHVSAVRFSQQYSLCSTIFLDDSTAIQHYLTMTIISVTLEIPHHITQRDADRTLSIPDEQLHSFAVSTVHIMKKRNGGGSLNNYSSSIPSTPSTSQEDPQFSVPPTANTPTPVCKRSMRWSNLFTSEKGSDPDKERKAPENHADTIGSGRAIPIKQGMLLKRSGKWLKTWKKKYVTLCSNGMLTYYSSLGDYMKNIHKKEIDLQTSTIKVPGKWPSLATSACTPISSSKSNGLSKDMDTGLGDSICFSPSISSTTSPKLNPPPSPHANKKKHLKKKSTNNFMIVSATGQTWHFEATTYEERDAWVQAIQSQILASLQSCESSKSKSQLTSQSEAMALQSIQNMRGNAHCVDCETQNPKWASLNLGVLMCIECSGIHRSLGPHLSRVRSLELDDWPVELRKVMSSIVNDLANSIWEGSSQGQTKPSEKSTREEKERWIRSKYEEKLFLAPLPCTELSLGQQLLRATADEDLQTAILLLAHGSCEEVNETCGEGDGCTALHLACRKGNVVLAQLLIWYGVDVMARDAHGNTALTYARQASSQECINVLLQYGCPDECV</sequence>
<accession>Q5VW22</accession>
<organism>
    <name type="scientific">Homo sapiens</name>
    <name type="common">Human</name>
    <dbReference type="NCBI Taxonomy" id="9606"/>
    <lineage>
        <taxon>Eukaryota</taxon>
        <taxon>Metazoa</taxon>
        <taxon>Chordata</taxon>
        <taxon>Craniata</taxon>
        <taxon>Vertebrata</taxon>
        <taxon>Euteleostomi</taxon>
        <taxon>Mammalia</taxon>
        <taxon>Eutheria</taxon>
        <taxon>Euarchontoglires</taxon>
        <taxon>Primates</taxon>
        <taxon>Haplorrhini</taxon>
        <taxon>Catarrhini</taxon>
        <taxon>Hominidae</taxon>
        <taxon>Homo</taxon>
    </lineage>
</organism>
<dbReference type="EMBL" id="AL442003">
    <property type="status" value="NOT_ANNOTATED_CDS"/>
    <property type="molecule type" value="Genomic_DNA"/>
</dbReference>
<dbReference type="EMBL" id="BC131545">
    <property type="status" value="NOT_ANNOTATED_CDS"/>
    <property type="molecule type" value="mRNA"/>
</dbReference>
<dbReference type="CCDS" id="CCDS44397.1">
    <molecule id="Q5VW22-2"/>
</dbReference>
<dbReference type="RefSeq" id="NP_001071133.2">
    <molecule id="Q5VW22-2"/>
    <property type="nucleotide sequence ID" value="NM_001077665.3"/>
</dbReference>
<dbReference type="RefSeq" id="XP_016871759.1">
    <property type="nucleotide sequence ID" value="XM_017016270.1"/>
</dbReference>
<dbReference type="SMR" id="Q5VW22"/>
<dbReference type="BioGRID" id="135969">
    <property type="interactions" value="1"/>
</dbReference>
<dbReference type="FunCoup" id="Q5VW22">
    <property type="interactions" value="249"/>
</dbReference>
<dbReference type="STRING" id="9606.ENSP00000500374"/>
<dbReference type="GlyGen" id="Q5VW22">
    <property type="glycosylation" value="1 site"/>
</dbReference>
<dbReference type="iPTMnet" id="Q5VW22"/>
<dbReference type="PhosphoSitePlus" id="Q5VW22"/>
<dbReference type="BioMuta" id="AGAP6"/>
<dbReference type="DMDM" id="74756919"/>
<dbReference type="jPOST" id="Q5VW22"/>
<dbReference type="MassIVE" id="Q5VW22"/>
<dbReference type="PaxDb" id="9606-ENSP00000400972"/>
<dbReference type="PeptideAtlas" id="Q5VW22"/>
<dbReference type="ProteomicsDB" id="65507">
    <molecule id="Q5VW22-1"/>
</dbReference>
<dbReference type="ProteomicsDB" id="65508">
    <molecule id="Q5VW22-2"/>
</dbReference>
<dbReference type="DNASU" id="414189"/>
<dbReference type="Ensembl" id="ENST00000374056.10">
    <molecule id="Q5VW22-1"/>
    <property type="protein sequence ID" value="ENSP00000363168.6"/>
    <property type="gene ID" value="ENSG00000204149.16"/>
</dbReference>
<dbReference type="Ensembl" id="ENST00000412531.7">
    <molecule id="Q5VW22-2"/>
    <property type="protein sequence ID" value="ENSP00000500374.1"/>
    <property type="gene ID" value="ENSG00000204149.16"/>
</dbReference>
<dbReference type="GeneID" id="414189"/>
<dbReference type="KEGG" id="hsa:414189"/>
<dbReference type="MANE-Select" id="ENST00000412531.7">
    <molecule id="Q5VW22-2"/>
    <property type="protein sequence ID" value="ENSP00000500374.1"/>
    <property type="RefSeq nucleotide sequence ID" value="NM_001077665.3"/>
    <property type="RefSeq protein sequence ID" value="NP_001071133.2"/>
</dbReference>
<dbReference type="UCSC" id="uc001jix.5">
    <molecule id="Q5VW22-1"/>
    <property type="organism name" value="human"/>
</dbReference>
<dbReference type="AGR" id="HGNC:23466"/>
<dbReference type="CTD" id="414189"/>
<dbReference type="GeneCards" id="AGAP6"/>
<dbReference type="HGNC" id="HGNC:23466">
    <property type="gene designation" value="AGAP6"/>
</dbReference>
<dbReference type="HPA" id="ENSG00000204149">
    <property type="expression patterns" value="Low tissue specificity"/>
</dbReference>
<dbReference type="neXtProt" id="NX_Q5VW22"/>
<dbReference type="VEuPathDB" id="HostDB:ENSG00000204149"/>
<dbReference type="eggNOG" id="KOG0705">
    <property type="taxonomic scope" value="Eukaryota"/>
</dbReference>
<dbReference type="GeneTree" id="ENSGT00940000163475"/>
<dbReference type="InParanoid" id="Q5VW22"/>
<dbReference type="OMA" id="ANAVWEY"/>
<dbReference type="OrthoDB" id="6136903at2759"/>
<dbReference type="PAN-GO" id="Q5VW22">
    <property type="GO annotations" value="3 GO annotations based on evolutionary models"/>
</dbReference>
<dbReference type="PhylomeDB" id="Q5VW22"/>
<dbReference type="TreeFam" id="TF317762"/>
<dbReference type="PathwayCommons" id="Q5VW22"/>
<dbReference type="SignaLink" id="Q5VW22"/>
<dbReference type="BioGRID-ORCS" id="414189">
    <property type="hits" value="487 hits in 1056 CRISPR screens"/>
</dbReference>
<dbReference type="ChiTaRS" id="AGAP6">
    <property type="organism name" value="human"/>
</dbReference>
<dbReference type="GenomeRNAi" id="414189"/>
<dbReference type="Pharos" id="Q5VW22">
    <property type="development level" value="Tdark"/>
</dbReference>
<dbReference type="PRO" id="PR:Q5VW22"/>
<dbReference type="Proteomes" id="UP000005640">
    <property type="component" value="Chromosome 10"/>
</dbReference>
<dbReference type="RNAct" id="Q5VW22">
    <property type="molecule type" value="protein"/>
</dbReference>
<dbReference type="Bgee" id="ENSG00000204149">
    <property type="expression patterns" value="Expressed in pituitary gland and 92 other cell types or tissues"/>
</dbReference>
<dbReference type="GO" id="GO:0005096">
    <property type="term" value="F:GTPase activator activity"/>
    <property type="evidence" value="ECO:0000318"/>
    <property type="project" value="GO_Central"/>
</dbReference>
<dbReference type="GO" id="GO:0003924">
    <property type="term" value="F:GTPase activity"/>
    <property type="evidence" value="ECO:0000318"/>
    <property type="project" value="GO_Central"/>
</dbReference>
<dbReference type="GO" id="GO:0008270">
    <property type="term" value="F:zinc ion binding"/>
    <property type="evidence" value="ECO:0007669"/>
    <property type="project" value="UniProtKB-KW"/>
</dbReference>
<dbReference type="CDD" id="cd01250">
    <property type="entry name" value="PH_AGAP"/>
    <property type="match status" value="1"/>
</dbReference>
<dbReference type="FunFam" id="1.10.220.150:FF:000001">
    <property type="entry name" value="Arf-GAP with GTPase, ANK repeat and PH domain-containing protein 1"/>
    <property type="match status" value="1"/>
</dbReference>
<dbReference type="FunFam" id="1.25.40.20:FF:000027">
    <property type="entry name" value="Arf-GAP with GTPase, ANK repeat and PH domain-containing protein 1"/>
    <property type="match status" value="1"/>
</dbReference>
<dbReference type="Gene3D" id="1.25.40.20">
    <property type="entry name" value="Ankyrin repeat-containing domain"/>
    <property type="match status" value="1"/>
</dbReference>
<dbReference type="Gene3D" id="1.10.220.150">
    <property type="entry name" value="Arf GTPase activating protein"/>
    <property type="match status" value="1"/>
</dbReference>
<dbReference type="Gene3D" id="2.30.29.30">
    <property type="entry name" value="Pleckstrin-homology domain (PH domain)/Phosphotyrosine-binding domain (PTB)"/>
    <property type="match status" value="1"/>
</dbReference>
<dbReference type="InterPro" id="IPR002110">
    <property type="entry name" value="Ankyrin_rpt"/>
</dbReference>
<dbReference type="InterPro" id="IPR036770">
    <property type="entry name" value="Ankyrin_rpt-contain_sf"/>
</dbReference>
<dbReference type="InterPro" id="IPR051282">
    <property type="entry name" value="Arf-GAP_GTPase_ANK_PH"/>
</dbReference>
<dbReference type="InterPro" id="IPR037278">
    <property type="entry name" value="ARFGAP/RecO"/>
</dbReference>
<dbReference type="InterPro" id="IPR001164">
    <property type="entry name" value="ArfGAP_dom"/>
</dbReference>
<dbReference type="InterPro" id="IPR038508">
    <property type="entry name" value="ArfGAP_dom_sf"/>
</dbReference>
<dbReference type="InterPro" id="IPR011993">
    <property type="entry name" value="PH-like_dom_sf"/>
</dbReference>
<dbReference type="InterPro" id="IPR001849">
    <property type="entry name" value="PH_domain"/>
</dbReference>
<dbReference type="PANTHER" id="PTHR45819:SF7">
    <property type="entry name" value="ARF-GAP WITH GTPASE, ANK REPEAT AND PH DOMAIN-CONTAINING PROTEIN 4-RELATED"/>
    <property type="match status" value="1"/>
</dbReference>
<dbReference type="PANTHER" id="PTHR45819">
    <property type="entry name" value="CENTAURIN-GAMMA-1A"/>
    <property type="match status" value="1"/>
</dbReference>
<dbReference type="Pfam" id="PF12796">
    <property type="entry name" value="Ank_2"/>
    <property type="match status" value="1"/>
</dbReference>
<dbReference type="Pfam" id="PF01412">
    <property type="entry name" value="ArfGap"/>
    <property type="match status" value="1"/>
</dbReference>
<dbReference type="PRINTS" id="PR00405">
    <property type="entry name" value="REVINTRACTNG"/>
</dbReference>
<dbReference type="SMART" id="SM00248">
    <property type="entry name" value="ANK"/>
    <property type="match status" value="2"/>
</dbReference>
<dbReference type="SMART" id="SM00105">
    <property type="entry name" value="ArfGap"/>
    <property type="match status" value="1"/>
</dbReference>
<dbReference type="SMART" id="SM00233">
    <property type="entry name" value="PH"/>
    <property type="match status" value="1"/>
</dbReference>
<dbReference type="SUPFAM" id="SSF48403">
    <property type="entry name" value="Ankyrin repeat"/>
    <property type="match status" value="1"/>
</dbReference>
<dbReference type="SUPFAM" id="SSF57863">
    <property type="entry name" value="ArfGap/RecO-like zinc finger"/>
    <property type="match status" value="1"/>
</dbReference>
<dbReference type="SUPFAM" id="SSF50729">
    <property type="entry name" value="PH domain-like"/>
    <property type="match status" value="1"/>
</dbReference>
<dbReference type="PROSITE" id="PS50297">
    <property type="entry name" value="ANK_REP_REGION"/>
    <property type="match status" value="1"/>
</dbReference>
<dbReference type="PROSITE" id="PS50088">
    <property type="entry name" value="ANK_REPEAT"/>
    <property type="match status" value="1"/>
</dbReference>
<dbReference type="PROSITE" id="PS50115">
    <property type="entry name" value="ARFGAP"/>
    <property type="match status" value="1"/>
</dbReference>
<dbReference type="PROSITE" id="PS50003">
    <property type="entry name" value="PH_DOMAIN"/>
    <property type="match status" value="1"/>
</dbReference>